<gene>
    <name evidence="6" type="primary">cpaO</name>
</gene>
<keyword id="KW-0274">FAD</keyword>
<keyword id="KW-0285">Flavoprotein</keyword>
<keyword id="KW-0560">Oxidoreductase</keyword>
<keyword id="KW-0732">Signal</keyword>
<keyword id="KW-0843">Virulence</keyword>
<name>CPAO_ASPOZ</name>
<proteinExistence type="evidence at protein level"/>
<sequence>MAVRIARFLGLSTVAYLALANGIDARDTISRDVIILGGGSSGTYAAIRLRDQGKTVAVVERNNYLGGHGETYYTEDNTPLNFGVEGFFNTTVTRNYLERLQVPYGRRDPAPAHEDYVNLNTGQRTEYTPGQLQDREAFAKWVDAISQFGFLDDGVYRIPEPVPEDLISPFADFVKKYHLEDAVYALFSHTSGDVLEMITLYVIQYIGVPHAAALNEGYVRPIEGIAALYKSAGKELGSDVLLETTPEAVQRFEDGVEVIVRSADGTKTLLKGKQLLVTIPPLLENLHGFPLSDQESRLFSKWQYHQYWAALVNDTGLPDDVNIVNVDTERLYGVPEEPFIWRLDNHWAPGYHNIKLVGGSEFGEDEAKAYMYERLDLLHAEGTYATHKPEIVKFASHTPVTMFVSAEEIRGGFYRQLYELQGLNSTFWTGATWASDYSTLLWGYTDEVLDQMASS</sequence>
<dbReference type="EC" id="1.21.99.1" evidence="6"/>
<dbReference type="EMBL" id="AB506492">
    <property type="protein sequence ID" value="BAK26560.1"/>
    <property type="molecule type" value="Genomic_DNA"/>
</dbReference>
<dbReference type="SMR" id="F5HN72"/>
<dbReference type="EnsemblFungi" id="BAE59504">
    <property type="protein sequence ID" value="BAE59504"/>
    <property type="gene ID" value="AO090026000003"/>
</dbReference>
<dbReference type="VEuPathDB" id="FungiDB:AO090026000003"/>
<dbReference type="eggNOG" id="ENOG502R1TU">
    <property type="taxonomic scope" value="Eukaryota"/>
</dbReference>
<dbReference type="BioCyc" id="MetaCyc:MONOMER-18888"/>
<dbReference type="GO" id="GO:0050448">
    <property type="term" value="F:beta-cyclopiazonate dehydrogenase activity"/>
    <property type="evidence" value="ECO:0007669"/>
    <property type="project" value="UniProtKB-EC"/>
</dbReference>
<dbReference type="Gene3D" id="1.10.405.20">
    <property type="match status" value="1"/>
</dbReference>
<dbReference type="Gene3D" id="3.30.70.1990">
    <property type="match status" value="1"/>
</dbReference>
<dbReference type="Gene3D" id="3.50.50.60">
    <property type="entry name" value="FAD/NAD(P)-binding domain"/>
    <property type="match status" value="1"/>
</dbReference>
<dbReference type="InterPro" id="IPR002937">
    <property type="entry name" value="Amino_oxidase"/>
</dbReference>
<dbReference type="InterPro" id="IPR036188">
    <property type="entry name" value="FAD/NAD-bd_sf"/>
</dbReference>
<dbReference type="Pfam" id="PF01593">
    <property type="entry name" value="Amino_oxidase"/>
    <property type="match status" value="1"/>
</dbReference>
<dbReference type="SUPFAM" id="SSF51905">
    <property type="entry name" value="FAD/NAD(P)-binding domain"/>
    <property type="match status" value="1"/>
</dbReference>
<reference key="1">
    <citation type="journal article" date="2011" name="ChemBioChem">
        <title>Genetic safeguard against mycotoxin cyclopiazonic acid production in Aspergillus oryzae.</title>
        <authorList>
            <person name="Kato N."/>
            <person name="Tokuoka M."/>
            <person name="Shinohara Y."/>
            <person name="Kawatani M."/>
            <person name="Uramoto M."/>
            <person name="Seshime Y."/>
            <person name="Fujii I."/>
            <person name="Kitamoto K."/>
            <person name="Takahashi T."/>
            <person name="Takahashi S."/>
            <person name="Koyama Y."/>
            <person name="Osada H."/>
        </authorList>
    </citation>
    <scope>NUCLEOTIDE SEQUENCE [GENOMIC DNA]</scope>
    <scope>FUNCTION</scope>
    <scope>DISRUPTION PHENOTYPE</scope>
    <scope>CATALYTIC ACTIVITY</scope>
    <source>
        <strain>NBRC 4177</strain>
    </source>
</reference>
<reference key="2">
    <citation type="journal article" date="2009" name="Biochemistry">
        <title>Cyclopiazonic acid biosynthesis in Aspergillus sp.: characterization of a reductase-like R* domain in cyclopiazonate synthetase that forms and releases cyclo-acetoacetyl-L-tryptophan.</title>
        <authorList>
            <person name="Liu X."/>
            <person name="Walsh C.T."/>
        </authorList>
    </citation>
    <scope>FUNCTION</scope>
    <scope>CATALYTIC ACTIVITY</scope>
    <scope>DOMAIN</scope>
</reference>
<reference key="3">
    <citation type="journal article" date="2009" name="Biochemistry">
        <title>Characterization of cyclo-acetoacetyl-L-tryptophan dimethylallyltransferase in cyclopiazonic acid biosynthesis: substrate promiscuity and site directed mutagenesis studies.</title>
        <authorList>
            <person name="Liu X."/>
            <person name="Walsh C.T."/>
        </authorList>
    </citation>
    <scope>FUNCTION</scope>
</reference>
<comment type="function">
    <text evidence="3 4 5">Beta-cyclopiazonate dehydrogenase; part of the gene cluster that mediates the biosynthesis of the fungal neurotoxin cyclopiazonic acid (CPA), a nanomolar inhibitor of Ca(2+)-ATPase with a unique pentacyclic indole tetramic acid scaffold (PubMed:21608094). The hybrid two module polyketide synthase-nonribosomal peptide synthetase (PKS-NRPS) cpaS incorporates acetyl-CoA, malonyl-CoA, and tryptophan (Trp) and utilizes a C-terminal redox-incompetent reductase domain to make and release the tryptophan tetramic acid, cyclo-acetoacetyl-L-tryptophan (c-AATrp), as the first intermediate in the pathway. CpaS catalyzes a Dieckmann-type cyclization on the N-acetoacetyl-Trp intermediate bound in thioester linkage to the phosphopantetheinyl arm of the T domain to form and release c-AATrp (PubMed:19663400). CpaD then regiospecifically dimethylallylates c-AATrp to form beta-cyclopiazonic acid. CpaD discriminates against free Trp but accepts tryptophan-containing thiohydantoins, diketopiperazines, and linear peptides as substrates for C4-prenylation and also acts as regiospecific O-dimethylallyltransferase (DMAT) on a tyrosine-derived tetramic acid (PubMed:19877600, PubMed:21608094). The beta-cyclopiazonate dehydrogenase cpaO then carries out the dehydrogenation of beta-CPA to yield an unstable enimine product, which is captured by intramolecular cyclization to create the pentacyclic fused scaffold of alpha-cyclopiazonate (PubMed:21608094). Finally, the cytochrome P450 monooxygenase cpaH mediates the conversion of CPA into the less toxic 2-oxocyclopiazonic acid, the end product of the CPA pathway in A.oryza (PubMed:21608094).</text>
</comment>
<comment type="catalytic activity">
    <reaction evidence="6">
        <text>beta-cyclopiazonate + A = alpha-cyclopiazonate + AH2</text>
        <dbReference type="Rhea" id="RHEA:14525"/>
        <dbReference type="ChEBI" id="CHEBI:13193"/>
        <dbReference type="ChEBI" id="CHEBI:17499"/>
        <dbReference type="ChEBI" id="CHEBI:58067"/>
        <dbReference type="ChEBI" id="CHEBI:58256"/>
        <dbReference type="EC" id="1.21.99.1"/>
    </reaction>
</comment>
<comment type="cofactor">
    <cofactor evidence="1">
        <name>FAD</name>
        <dbReference type="ChEBI" id="CHEBI:57692"/>
    </cofactor>
</comment>
<comment type="disruption phenotype">
    <text evidence="5">Impairs the production of cyclopiazonic acid, but accumulates its biosynthetic intermediates cyclo-acetoacetyl-L-tryptophan and beta-cyclopiazonic acid.</text>
</comment>
<comment type="similarity">
    <text evidence="7">Belongs to the beta-cyclopiazonate dehydrogenase family.</text>
</comment>
<organism>
    <name type="scientific">Aspergillus oryzae</name>
    <name type="common">Yellow koji mold</name>
    <dbReference type="NCBI Taxonomy" id="5062"/>
    <lineage>
        <taxon>Eukaryota</taxon>
        <taxon>Fungi</taxon>
        <taxon>Dikarya</taxon>
        <taxon>Ascomycota</taxon>
        <taxon>Pezizomycotina</taxon>
        <taxon>Eurotiomycetes</taxon>
        <taxon>Eurotiomycetidae</taxon>
        <taxon>Eurotiales</taxon>
        <taxon>Aspergillaceae</taxon>
        <taxon>Aspergillus</taxon>
        <taxon>Aspergillus subgen. Circumdati</taxon>
    </lineage>
</organism>
<evidence type="ECO:0000250" key="1">
    <source>
        <dbReference type="UniProtKB" id="B8NI10"/>
    </source>
</evidence>
<evidence type="ECO:0000255" key="2"/>
<evidence type="ECO:0000269" key="3">
    <source>
    </source>
</evidence>
<evidence type="ECO:0000269" key="4">
    <source>
    </source>
</evidence>
<evidence type="ECO:0000269" key="5">
    <source>
    </source>
</evidence>
<evidence type="ECO:0000303" key="6">
    <source>
    </source>
</evidence>
<evidence type="ECO:0000305" key="7"/>
<feature type="signal peptide" evidence="2">
    <location>
        <begin position="1"/>
        <end position="25"/>
    </location>
</feature>
<feature type="chain" id="PRO_0000430691" description="Beta-cyclopiazonate dehydrogenase">
    <location>
        <begin position="26"/>
        <end position="455"/>
    </location>
</feature>
<protein>
    <recommendedName>
        <fullName evidence="7">Beta-cyclopiazonate dehydrogenase</fullName>
        <ecNumber evidence="6">1.21.99.1</ecNumber>
    </recommendedName>
    <alternativeName>
        <fullName evidence="6">Beta-Cyclopiazonate oxidocyclase</fullName>
    </alternativeName>
    <alternativeName>
        <fullName evidence="7">FAD-dependent oxidoreductase cpaO</fullName>
    </alternativeName>
</protein>
<accession>F5HN72</accession>